<protein>
    <recommendedName>
        <fullName evidence="7 8">Gamma-hexachlorocyclohexane dehydrochlorinase</fullName>
        <shortName evidence="8">Gamma-HCH dehydrochlorinase</shortName>
        <ecNumber evidence="2 6">4.5.1.-</ecNumber>
    </recommendedName>
</protein>
<name>LINA_SPHIU</name>
<dbReference type="EC" id="4.5.1.-" evidence="2 6"/>
<dbReference type="EMBL" id="S63514">
    <property type="protein sequence ID" value="AAC60443.1"/>
    <property type="status" value="ALT_SEQ"/>
    <property type="molecule type" value="Genomic_DNA"/>
</dbReference>
<dbReference type="EMBL" id="D90355">
    <property type="protein sequence ID" value="BAA14369.2"/>
    <property type="molecule type" value="Genomic_DNA"/>
</dbReference>
<dbReference type="EMBL" id="AP010803">
    <property type="protein sequence ID" value="BAI96690.1"/>
    <property type="molecule type" value="Genomic_DNA"/>
</dbReference>
<dbReference type="PIR" id="A41334">
    <property type="entry name" value="A41334"/>
</dbReference>
<dbReference type="RefSeq" id="WP_013040172.1">
    <property type="nucleotide sequence ID" value="NC_014006.1"/>
</dbReference>
<dbReference type="PDB" id="3A76">
    <property type="method" value="X-ray"/>
    <property type="resolution" value="2.25 A"/>
    <property type="chains" value="A/B/C=1-156"/>
</dbReference>
<dbReference type="PDBsum" id="3A76"/>
<dbReference type="SMR" id="P51697"/>
<dbReference type="STRING" id="452662.SJA_C1-18560"/>
<dbReference type="GeneID" id="29273457"/>
<dbReference type="KEGG" id="sjp:SJA_C1-18560"/>
<dbReference type="eggNOG" id="COG3631">
    <property type="taxonomic scope" value="Bacteria"/>
</dbReference>
<dbReference type="HOGENOM" id="CLU_106738_7_3_5"/>
<dbReference type="BioCyc" id="MetaCyc:LINAPSEPA-MONOMER"/>
<dbReference type="BRENDA" id="4.5.1.B1">
    <property type="organism ID" value="10293"/>
</dbReference>
<dbReference type="UniPathway" id="UPA00689"/>
<dbReference type="EvolutionaryTrace" id="P51697"/>
<dbReference type="Proteomes" id="UP000007753">
    <property type="component" value="Chromosome 1"/>
</dbReference>
<dbReference type="GO" id="GO:0042597">
    <property type="term" value="C:periplasmic space"/>
    <property type="evidence" value="ECO:0007669"/>
    <property type="project" value="UniProtKB-SubCell"/>
</dbReference>
<dbReference type="GO" id="GO:0016829">
    <property type="term" value="F:lyase activity"/>
    <property type="evidence" value="ECO:0007669"/>
    <property type="project" value="UniProtKB-KW"/>
</dbReference>
<dbReference type="GO" id="GO:0009636">
    <property type="term" value="P:response to toxic substance"/>
    <property type="evidence" value="ECO:0007669"/>
    <property type="project" value="UniProtKB-KW"/>
</dbReference>
<dbReference type="Gene3D" id="3.10.450.50">
    <property type="match status" value="1"/>
</dbReference>
<dbReference type="InterPro" id="IPR032710">
    <property type="entry name" value="NTF2-like_dom_sf"/>
</dbReference>
<dbReference type="InterPro" id="IPR037401">
    <property type="entry name" value="SnoaL-like"/>
</dbReference>
<dbReference type="Pfam" id="PF13577">
    <property type="entry name" value="SnoaL_4"/>
    <property type="match status" value="1"/>
</dbReference>
<dbReference type="SUPFAM" id="SSF54427">
    <property type="entry name" value="NTF2-like"/>
    <property type="match status" value="1"/>
</dbReference>
<proteinExistence type="evidence at protein level"/>
<keyword id="KW-0002">3D-structure</keyword>
<keyword id="KW-0216">Detoxification</keyword>
<keyword id="KW-0903">Direct protein sequencing</keyword>
<keyword id="KW-0456">Lyase</keyword>
<keyword id="KW-0574">Periplasm</keyword>
<keyword id="KW-1185">Reference proteome</keyword>
<comment type="function">
    <text evidence="2 5 6">Catalyzes the conversion of the important environmental pollutant gamma-hexachlorocyclohexane (gamma-HCH or lindane) to 1,3,4,6-tetrachloro-1,4-cyclohexadiene (1,4-TCDN) via gamma-pentachlorocyclohexene (gamma-PCCH), proceeding by two successive 1,2-anti conformationally dependent dehydrochlorinations (PubMed:11099497). Also shows activity with alpha- and delta-HCH, giving alpha- and delta-PCCH respectively, but not with the beta isomer (Ref.6). Is involved in the degradation pathway that allows S.japonicum UT26 to grow on gamma-HCH as the sole source of carbon and energy (PubMed:7686793).</text>
</comment>
<comment type="catalytic activity">
    <reaction evidence="2 6">
        <text>gamma-hexachlorocyclohexane = (3R,4S,5S,6R)-pentachlorocyclohexene + chloride + H(+)</text>
        <dbReference type="Rhea" id="RHEA:45480"/>
        <dbReference type="ChEBI" id="CHEBI:10576"/>
        <dbReference type="ChEBI" id="CHEBI:15378"/>
        <dbReference type="ChEBI" id="CHEBI:17996"/>
        <dbReference type="ChEBI" id="CHEBI:32888"/>
    </reaction>
</comment>
<comment type="catalytic activity">
    <reaction evidence="2">
        <text>(3R,4S,5S,6R)-pentachlorocyclohexene = (3R,6R)-1,3,4,6-tetrachlorocyclohexa-1,4-diene + chloride + H(+)</text>
        <dbReference type="Rhea" id="RHEA:12152"/>
        <dbReference type="ChEBI" id="CHEBI:10576"/>
        <dbReference type="ChEBI" id="CHEBI:15378"/>
        <dbReference type="ChEBI" id="CHEBI:17996"/>
        <dbReference type="ChEBI" id="CHEBI:18904"/>
    </reaction>
</comment>
<comment type="biophysicochemical properties">
    <phDependence>
        <text evidence="6">Optimum pH is 7.5.</text>
    </phDependence>
</comment>
<comment type="pathway">
    <text evidence="5">Xenobiotic degradation; gamma-hexachlorocyclohexane degradation.</text>
</comment>
<comment type="subunit">
    <text evidence="4">Homotrimer.</text>
</comment>
<comment type="subcellular location">
    <subcellularLocation>
        <location evidence="1">Periplasm</location>
    </subcellularLocation>
</comment>
<comment type="induction">
    <text>Constitutively expressed.</text>
</comment>
<comment type="miscellaneous">
    <text evidence="10">Is not N-terminally processed during export, so it may be secreted into the periplasmic space via a hitherto unknown mechanism.</text>
</comment>
<comment type="miscellaneous">
    <text evidence="9">Gamma-hexachlorocyclohexane (lindane) is an organochlorine insecticide which has been used worldwide since the 1940s. Because of its toxicity and long persistence in soil, most countries have prohibited the use of gamma-HCH. However, many contaminated sites still remain throughout the world.</text>
</comment>
<comment type="similarity">
    <text evidence="9">Belongs to the HCH dehydrochlorinase family.</text>
</comment>
<reference key="1">
    <citation type="journal article" date="1991" name="J. Bacteriol.">
        <title>Molecular cloning of a Pseudomonas paucimobilis gene encoding a 17-kilodalton polypeptide that eliminates HCl molecules from gamma-hexachlorocyclohexane.</title>
        <authorList>
            <person name="Imai R."/>
            <person name="Nagata Y."/>
            <person name="Fukuda M."/>
            <person name="Takagi M."/>
            <person name="Yano K."/>
        </authorList>
    </citation>
    <scope>NUCLEOTIDE SEQUENCE [GENOMIC DNA]</scope>
    <source>
        <strain>DSM 16413 / CCM 7287 / MTCC 6362 / UT26 / NBRC 101211 / UT26S</strain>
    </source>
</reference>
<reference key="2">
    <citation type="submission" date="1999-03" db="EMBL/GenBank/DDBJ databases">
        <authorList>
            <person name="Imai R."/>
            <person name="Nagata Y."/>
            <person name="Fukuda M."/>
            <person name="Takagi M."/>
            <person name="Yano K."/>
        </authorList>
    </citation>
    <scope>SEQUENCE REVISION</scope>
</reference>
<reference key="3">
    <citation type="journal article" date="2010" name="J. Bacteriol.">
        <title>Complete genome sequence of the representative gamma-hexachlorocyclohexane-degrading bacterium Sphingobium japonicum UT26.</title>
        <authorList>
            <person name="Nagata Y."/>
            <person name="Ohtsubo Y."/>
            <person name="Endo R."/>
            <person name="Ichikawa N."/>
            <person name="Ankai A."/>
            <person name="Oguchi A."/>
            <person name="Fukui S."/>
            <person name="Fujita N."/>
            <person name="Tsuda M."/>
        </authorList>
    </citation>
    <scope>NUCLEOTIDE SEQUENCE [LARGE SCALE GENOMIC DNA]</scope>
    <source>
        <strain>DSM 16413 / CCM 7287 / MTCC 6362 / UT26 / NBRC 101211 / UT26S</strain>
    </source>
</reference>
<reference key="4">
    <citation type="journal article" date="1999" name="J. Bacteriol.">
        <title>Two different types of dehalogenases, LinA and LinB, involved in gamma-hexachlorocyclohexane degradation in Sphingomonas paucimobilis UT26 are localized in the periplasmic space without molecular processing.</title>
        <authorList>
            <person name="Nagata Y."/>
            <person name="Futamura A."/>
            <person name="Miyauchi K."/>
            <person name="Takagi M."/>
        </authorList>
    </citation>
    <scope>PROTEIN SEQUENCE OF 2-10</scope>
    <scope>SUBCELLULAR LOCATION</scope>
</reference>
<reference key="5">
    <citation type="journal article" date="1993" name="Biosci. Biotechnol. Biochem.">
        <title>Isolation and characterization of Tn5-induced mutants of Pseudomonas paucimobilis UT26 defective in gamma-hexachlorocyclohexane dehydrochlorinase (LinA).</title>
        <authorList>
            <person name="Nagata Y."/>
            <person name="Imai R."/>
            <person name="Sakai A."/>
            <person name="Fukuda M."/>
            <person name="Yano K."/>
            <person name="Takagi M."/>
        </authorList>
    </citation>
    <scope>FUNCTION</scope>
    <scope>PATHWAY</scope>
    <source>
        <strain>DSM 16413 / CCM 7287 / MTCC 6362 / UT26 / NBRC 101211 / UT26S</strain>
    </source>
</reference>
<reference key="6">
    <citation type="journal article" date="1993" name="Biosci. Biotechnol. Biochem.">
        <title>Purification and characterization of gamma-hexachlorocyclohexane (gamma-HCH) dehydrochlorinase (LinA) from Pseudomonas paucimobilis.</title>
        <authorList>
            <person name="Nagata Y."/>
            <person name="Imai R."/>
            <person name="Sakai A."/>
            <person name="Fukuda M."/>
            <person name="Yano K."/>
            <person name="Takagi M."/>
        </authorList>
    </citation>
    <scope>FUNCTION</scope>
    <scope>CATALYTIC ACTIVITY</scope>
    <scope>SUBSTRATE SPECIFICITY</scope>
    <scope>BIOPHYSICOCHEMICAL PROPERTIES</scope>
    <source>
        <strain>DSM 16413 / CCM 7287 / MTCC 6362 / UT26 / NBRC 101211 / UT26S</strain>
    </source>
</reference>
<reference key="7">
    <citation type="journal article" date="2001" name="J. Biol. Chem.">
        <title>Reaction mechanism and stereochemistry of gamma-hexachlorocyclohexane dehydrochlorinase LinA.</title>
        <authorList>
            <person name="Trantirek L."/>
            <person name="Hynkova K."/>
            <person name="Nagata Y."/>
            <person name="Murzin A.G."/>
            <person name="Ansorgova A."/>
            <person name="Sklenar V."/>
            <person name="Damborsky J."/>
        </authorList>
    </citation>
    <scope>FUNCTION</scope>
    <scope>CATALYTIC ACTIVITY</scope>
    <scope>REACTION MECHANISM</scope>
    <source>
        <strain>DSM 16413 / CCM 7287 / MTCC 6362 / UT26 / NBRC 101211 / UT26S</strain>
    </source>
</reference>
<reference key="8">
    <citation type="journal article" date="2001" name="Proteins">
        <title>Identification of protein fold and catalytic residues of gamma-hexachlorocyclohexane dehydrochlorinase LinA.</title>
        <authorList>
            <person name="Nagata Y."/>
            <person name="Mori K."/>
            <person name="Takagi M."/>
            <person name="Murzin A.G."/>
            <person name="Damborsky J."/>
        </authorList>
    </citation>
    <scope>MUTAGENESIS OF LYS-20; ASP-25; TRP-42; TYR-50; LEU-64; MET-67; HIS-73; LEU-96; PHE-113; ASP-115; ARG-129 AND PHE-144</scope>
    <scope>3D-STRUCTURE MODELING</scope>
    <scope>ACTIVE SITE</scope>
</reference>
<reference evidence="14" key="9">
    <citation type="journal article" date="2010" name="J. Mol. Biol.">
        <title>Crystal structure of gamma-hexachlorocyclohexane dehydrochlorinase LinA from Sphingobium japonicum UT26.</title>
        <authorList>
            <person name="Okai M."/>
            <person name="Kubota K."/>
            <person name="Fukuda M."/>
            <person name="Nagata Y."/>
            <person name="Nagata K."/>
            <person name="Tanokura M."/>
        </authorList>
    </citation>
    <scope>X-RAY CRYSTALLOGRAPHY (2.25 ANGSTROMS)</scope>
    <scope>SUBUNIT</scope>
    <scope>ACTIVE SITE</scope>
    <source>
        <strain>DSM 16413 / CCM 7287 / MTCC 6362 / UT26 / NBRC 101211 / UT26S</strain>
    </source>
</reference>
<sequence length="156" mass="17342">MSDLDRLASRAAIQDLYSDKLIAVDKRQEGRLASIWWDDAEWTIEGIGTYKGPEGALDLANNVLWPMFHECIHYGTNLRLEFVSADKVNGIGDVLLLGNLVEGNQSILIAAVFTDEYERRDGVWKFSKRNACTNYFTPLAGIHFAPPGIHFAPSGA</sequence>
<evidence type="ECO:0000269" key="1">
    <source>
    </source>
</evidence>
<evidence type="ECO:0000269" key="2">
    <source>
    </source>
</evidence>
<evidence type="ECO:0000269" key="3">
    <source>
    </source>
</evidence>
<evidence type="ECO:0000269" key="4">
    <source>
    </source>
</evidence>
<evidence type="ECO:0000269" key="5">
    <source>
    </source>
</evidence>
<evidence type="ECO:0000269" key="6">
    <source ref="6"/>
</evidence>
<evidence type="ECO:0000303" key="7">
    <source>
    </source>
</evidence>
<evidence type="ECO:0000303" key="8">
    <source>
    </source>
</evidence>
<evidence type="ECO:0000305" key="9"/>
<evidence type="ECO:0000305" key="10">
    <source>
    </source>
</evidence>
<evidence type="ECO:0000305" key="11">
    <source>
    </source>
</evidence>
<evidence type="ECO:0000305" key="12">
    <source>
    </source>
</evidence>
<evidence type="ECO:0000312" key="13">
    <source>
        <dbReference type="EMBL" id="BAI96690.1"/>
    </source>
</evidence>
<evidence type="ECO:0007744" key="14">
    <source>
        <dbReference type="PDB" id="3A76"/>
    </source>
</evidence>
<evidence type="ECO:0007829" key="15">
    <source>
        <dbReference type="PDB" id="3A76"/>
    </source>
</evidence>
<accession>P51697</accession>
<accession>D4Z258</accession>
<organism>
    <name type="scientific">Sphingobium indicum (strain DSM 16413 / CCM 7287 / MTCC 6362 / UT26 / NBRC 101211 / UT26S)</name>
    <name type="common">Sphingobium japonicum</name>
    <dbReference type="NCBI Taxonomy" id="452662"/>
    <lineage>
        <taxon>Bacteria</taxon>
        <taxon>Pseudomonadati</taxon>
        <taxon>Pseudomonadota</taxon>
        <taxon>Alphaproteobacteria</taxon>
        <taxon>Sphingomonadales</taxon>
        <taxon>Sphingomonadaceae</taxon>
        <taxon>Sphingobium</taxon>
    </lineage>
</organism>
<feature type="initiator methionine" description="Removed" evidence="1">
    <location>
        <position position="1"/>
    </location>
</feature>
<feature type="chain" id="PRO_0000084436" description="Gamma-hexachlorocyclohexane dehydrochlorinase">
    <location>
        <begin position="2"/>
        <end position="156"/>
    </location>
</feature>
<feature type="active site" evidence="11 12">
    <location>
        <position position="25"/>
    </location>
</feature>
<feature type="active site" description="Proton acceptor" evidence="11 12">
    <location>
        <position position="73"/>
    </location>
</feature>
<feature type="mutagenesis site" description="69% of wild-type activity." evidence="3">
    <original>K</original>
    <variation>M</variation>
    <location>
        <position position="20"/>
    </location>
</feature>
<feature type="mutagenesis site" description="3% of wild-type activity." evidence="3">
    <original>K</original>
    <variation>Q</variation>
    <location>
        <position position="20"/>
    </location>
</feature>
<feature type="mutagenesis site" description="Loss of activity." evidence="3">
    <original>D</original>
    <variation>N</variation>
    <variation>L</variation>
    <location>
        <position position="25"/>
    </location>
</feature>
<feature type="mutagenesis site" description="5% of wild-type activity." evidence="3">
    <original>W</original>
    <variation>L</variation>
    <location>
        <position position="42"/>
    </location>
</feature>
<feature type="mutagenesis site" description="62% of wild-type activity." evidence="3">
    <original>Y</original>
    <variation>A</variation>
    <location>
        <position position="50"/>
    </location>
</feature>
<feature type="mutagenesis site" description="Loss of activity." evidence="3">
    <original>L</original>
    <variation>A</variation>
    <location>
        <position position="64"/>
    </location>
</feature>
<feature type="mutagenesis site" description="No change in activity." evidence="3">
    <original>M</original>
    <variation>A</variation>
    <location>
        <position position="67"/>
    </location>
</feature>
<feature type="mutagenesis site" description="Loss of activity." evidence="3">
    <original>H</original>
    <variation>Q</variation>
    <location>
        <position position="73"/>
    </location>
</feature>
<feature type="mutagenesis site" description="10% of wild-type activity." evidence="3">
    <original>L</original>
    <variation>A</variation>
    <location>
        <position position="96"/>
    </location>
</feature>
<feature type="mutagenesis site" description="38% of wild-type activity." evidence="3">
    <original>F</original>
    <variation>L</variation>
    <location>
        <position position="113"/>
    </location>
</feature>
<feature type="mutagenesis site" description="1% of wild-type activity." evidence="3">
    <original>F</original>
    <variation>Y</variation>
    <location>
        <position position="113"/>
    </location>
</feature>
<feature type="mutagenesis site" description="69% of wild-type activity." evidence="3">
    <original>D</original>
    <variation>L</variation>
    <location>
        <position position="115"/>
    </location>
</feature>
<feature type="mutagenesis site" description="73% of wild-type activity." evidence="3">
    <original>D</original>
    <variation>N</variation>
    <location>
        <position position="115"/>
    </location>
</feature>
<feature type="mutagenesis site" description="Loss of activity." evidence="3">
    <original>R</original>
    <variation>Y</variation>
    <variation>M</variation>
    <location>
        <position position="129"/>
    </location>
</feature>
<feature type="mutagenesis site" description="No change in activity." evidence="3">
    <original>F</original>
    <variation>L</variation>
    <location>
        <position position="144"/>
    </location>
</feature>
<feature type="helix" evidence="15">
    <location>
        <begin position="2"/>
        <end position="26"/>
    </location>
</feature>
<feature type="helix" evidence="15">
    <location>
        <begin position="29"/>
        <end position="33"/>
    </location>
</feature>
<feature type="strand" evidence="15">
    <location>
        <begin position="36"/>
        <end position="44"/>
    </location>
</feature>
<feature type="turn" evidence="15">
    <location>
        <begin position="45"/>
        <end position="47"/>
    </location>
</feature>
<feature type="strand" evidence="15">
    <location>
        <begin position="48"/>
        <end position="51"/>
    </location>
</feature>
<feature type="helix" evidence="15">
    <location>
        <begin position="52"/>
        <end position="62"/>
    </location>
</feature>
<feature type="helix" evidence="15">
    <location>
        <begin position="64"/>
        <end position="67"/>
    </location>
</feature>
<feature type="strand" evidence="15">
    <location>
        <begin position="68"/>
        <end position="100"/>
    </location>
</feature>
<feature type="helix" evidence="15">
    <location>
        <begin position="102"/>
        <end position="104"/>
    </location>
</feature>
<feature type="strand" evidence="15">
    <location>
        <begin position="105"/>
        <end position="120"/>
    </location>
</feature>
<feature type="strand" evidence="15">
    <location>
        <begin position="123"/>
        <end position="138"/>
    </location>
</feature>
<gene>
    <name evidence="7" type="primary">linA</name>
    <name evidence="13" type="ordered locus">SJA_C1-18560</name>
</gene>